<evidence type="ECO:0000250" key="1"/>
<evidence type="ECO:0000250" key="2">
    <source>
        <dbReference type="UniProtKB" id="P13517"/>
    </source>
</evidence>
<evidence type="ECO:0000250" key="3">
    <source>
        <dbReference type="UniProtKB" id="Q9HGP5"/>
    </source>
</evidence>
<evidence type="ECO:0000305" key="4"/>
<protein>
    <recommendedName>
        <fullName>F-actin-capping protein subunit beta</fullName>
    </recommendedName>
</protein>
<reference key="1">
    <citation type="journal article" date="2004" name="Nature">
        <title>Genome evolution in yeasts.</title>
        <authorList>
            <person name="Dujon B."/>
            <person name="Sherman D."/>
            <person name="Fischer G."/>
            <person name="Durrens P."/>
            <person name="Casaregola S."/>
            <person name="Lafontaine I."/>
            <person name="de Montigny J."/>
            <person name="Marck C."/>
            <person name="Neuveglise C."/>
            <person name="Talla E."/>
            <person name="Goffard N."/>
            <person name="Frangeul L."/>
            <person name="Aigle M."/>
            <person name="Anthouard V."/>
            <person name="Babour A."/>
            <person name="Barbe V."/>
            <person name="Barnay S."/>
            <person name="Blanchin S."/>
            <person name="Beckerich J.-M."/>
            <person name="Beyne E."/>
            <person name="Bleykasten C."/>
            <person name="Boisrame A."/>
            <person name="Boyer J."/>
            <person name="Cattolico L."/>
            <person name="Confanioleri F."/>
            <person name="de Daruvar A."/>
            <person name="Despons L."/>
            <person name="Fabre E."/>
            <person name="Fairhead C."/>
            <person name="Ferry-Dumazet H."/>
            <person name="Groppi A."/>
            <person name="Hantraye F."/>
            <person name="Hennequin C."/>
            <person name="Jauniaux N."/>
            <person name="Joyet P."/>
            <person name="Kachouri R."/>
            <person name="Kerrest A."/>
            <person name="Koszul R."/>
            <person name="Lemaire M."/>
            <person name="Lesur I."/>
            <person name="Ma L."/>
            <person name="Muller H."/>
            <person name="Nicaud J.-M."/>
            <person name="Nikolski M."/>
            <person name="Oztas S."/>
            <person name="Ozier-Kalogeropoulos O."/>
            <person name="Pellenz S."/>
            <person name="Potier S."/>
            <person name="Richard G.-F."/>
            <person name="Straub M.-L."/>
            <person name="Suleau A."/>
            <person name="Swennen D."/>
            <person name="Tekaia F."/>
            <person name="Wesolowski-Louvel M."/>
            <person name="Westhof E."/>
            <person name="Wirth B."/>
            <person name="Zeniou-Meyer M."/>
            <person name="Zivanovic Y."/>
            <person name="Bolotin-Fukuhara M."/>
            <person name="Thierry A."/>
            <person name="Bouchier C."/>
            <person name="Caudron B."/>
            <person name="Scarpelli C."/>
            <person name="Gaillardin C."/>
            <person name="Weissenbach J."/>
            <person name="Wincker P."/>
            <person name="Souciet J.-L."/>
        </authorList>
    </citation>
    <scope>NUCLEOTIDE SEQUENCE [LARGE SCALE GENOMIC DNA]</scope>
    <source>
        <strain>CLIB 122 / E 150</strain>
    </source>
</reference>
<dbReference type="EMBL" id="CR382129">
    <property type="protein sequence ID" value="CAG82380.2"/>
    <property type="molecule type" value="Genomic_DNA"/>
</dbReference>
<dbReference type="RefSeq" id="XP_502060.2">
    <property type="nucleotide sequence ID" value="XM_502060.2"/>
</dbReference>
<dbReference type="SMR" id="Q6CBA2"/>
<dbReference type="FunCoup" id="Q6CBA2">
    <property type="interactions" value="933"/>
</dbReference>
<dbReference type="STRING" id="284591.Q6CBA2"/>
<dbReference type="EnsemblFungi" id="CAG82380">
    <property type="protein sequence ID" value="CAG82380"/>
    <property type="gene ID" value="YALI0_C20735g"/>
</dbReference>
<dbReference type="KEGG" id="yli:2909862"/>
<dbReference type="VEuPathDB" id="FungiDB:YALI0_C20735g"/>
<dbReference type="HOGENOM" id="CLU_045864_1_1_1"/>
<dbReference type="InParanoid" id="Q6CBA2"/>
<dbReference type="OMA" id="WSNKYYP"/>
<dbReference type="OrthoDB" id="82163at4891"/>
<dbReference type="Proteomes" id="UP000001300">
    <property type="component" value="Chromosome C"/>
</dbReference>
<dbReference type="GO" id="GO:0099079">
    <property type="term" value="C:actin body"/>
    <property type="evidence" value="ECO:0007669"/>
    <property type="project" value="EnsemblFungi"/>
</dbReference>
<dbReference type="GO" id="GO:0030479">
    <property type="term" value="C:actin cortical patch"/>
    <property type="evidence" value="ECO:0000318"/>
    <property type="project" value="GO_Central"/>
</dbReference>
<dbReference type="GO" id="GO:0000142">
    <property type="term" value="C:cellular bud neck contractile ring"/>
    <property type="evidence" value="ECO:0007669"/>
    <property type="project" value="EnsemblFungi"/>
</dbReference>
<dbReference type="GO" id="GO:0005934">
    <property type="term" value="C:cellular bud tip"/>
    <property type="evidence" value="ECO:0007669"/>
    <property type="project" value="EnsemblFungi"/>
</dbReference>
<dbReference type="GO" id="GO:0008290">
    <property type="term" value="C:F-actin capping protein complex"/>
    <property type="evidence" value="ECO:0000318"/>
    <property type="project" value="GO_Central"/>
</dbReference>
<dbReference type="GO" id="GO:0000131">
    <property type="term" value="C:incipient cellular bud site"/>
    <property type="evidence" value="ECO:0007669"/>
    <property type="project" value="EnsemblFungi"/>
</dbReference>
<dbReference type="GO" id="GO:0043332">
    <property type="term" value="C:mating projection tip"/>
    <property type="evidence" value="ECO:0007669"/>
    <property type="project" value="EnsemblFungi"/>
</dbReference>
<dbReference type="GO" id="GO:0031097">
    <property type="term" value="C:medial cortex"/>
    <property type="evidence" value="ECO:0007669"/>
    <property type="project" value="EnsemblFungi"/>
</dbReference>
<dbReference type="GO" id="GO:0005634">
    <property type="term" value="C:nucleus"/>
    <property type="evidence" value="ECO:0007669"/>
    <property type="project" value="EnsemblFungi"/>
</dbReference>
<dbReference type="GO" id="GO:0051015">
    <property type="term" value="F:actin filament binding"/>
    <property type="evidence" value="ECO:0000318"/>
    <property type="project" value="GO_Central"/>
</dbReference>
<dbReference type="GO" id="GO:0044396">
    <property type="term" value="P:actin cortical patch organization"/>
    <property type="evidence" value="ECO:0007669"/>
    <property type="project" value="EnsemblFungi"/>
</dbReference>
<dbReference type="GO" id="GO:0051016">
    <property type="term" value="P:barbed-end actin filament capping"/>
    <property type="evidence" value="ECO:0000318"/>
    <property type="project" value="GO_Central"/>
</dbReference>
<dbReference type="GO" id="GO:0000902">
    <property type="term" value="P:cell morphogenesis"/>
    <property type="evidence" value="ECO:0000318"/>
    <property type="project" value="GO_Central"/>
</dbReference>
<dbReference type="GO" id="GO:0030447">
    <property type="term" value="P:filamentous growth"/>
    <property type="evidence" value="ECO:0007669"/>
    <property type="project" value="EnsemblFungi"/>
</dbReference>
<dbReference type="GO" id="GO:1904600">
    <property type="term" value="P:mating projection actin fusion focus assembly"/>
    <property type="evidence" value="ECO:0007669"/>
    <property type="project" value="EnsemblFungi"/>
</dbReference>
<dbReference type="GO" id="GO:1903475">
    <property type="term" value="P:mitotic actomyosin contractile ring assembly"/>
    <property type="evidence" value="ECO:0007669"/>
    <property type="project" value="EnsemblFungi"/>
</dbReference>
<dbReference type="GO" id="GO:1902404">
    <property type="term" value="P:mitotic actomyosin contractile ring contraction"/>
    <property type="evidence" value="ECO:0007669"/>
    <property type="project" value="EnsemblFungi"/>
</dbReference>
<dbReference type="FunFam" id="1.20.58.570:FF:000001">
    <property type="entry name" value="F-actin-capping protein subunit beta"/>
    <property type="match status" value="1"/>
</dbReference>
<dbReference type="Gene3D" id="1.20.58.570">
    <property type="match status" value="1"/>
</dbReference>
<dbReference type="Gene3D" id="3.90.1150.210">
    <property type="entry name" value="F-actin capping protein, beta subunit"/>
    <property type="match status" value="1"/>
</dbReference>
<dbReference type="InterPro" id="IPR037282">
    <property type="entry name" value="CapZ_alpha/beta"/>
</dbReference>
<dbReference type="InterPro" id="IPR042276">
    <property type="entry name" value="CapZ_alpha/beta_2"/>
</dbReference>
<dbReference type="InterPro" id="IPR001698">
    <property type="entry name" value="CAPZB"/>
</dbReference>
<dbReference type="InterPro" id="IPR043175">
    <property type="entry name" value="CAPZB_N"/>
</dbReference>
<dbReference type="InterPro" id="IPR019771">
    <property type="entry name" value="F-actin_capping_bsu_CS"/>
</dbReference>
<dbReference type="PANTHER" id="PTHR10619">
    <property type="entry name" value="F-ACTIN-CAPPING PROTEIN SUBUNIT BETA"/>
    <property type="match status" value="1"/>
</dbReference>
<dbReference type="PANTHER" id="PTHR10619:SF0">
    <property type="entry name" value="F-ACTIN-CAPPING PROTEIN SUBUNIT BETA ISOFORMS 1 AND 2"/>
    <property type="match status" value="1"/>
</dbReference>
<dbReference type="Pfam" id="PF01115">
    <property type="entry name" value="F_actin_cap_B"/>
    <property type="match status" value="1"/>
</dbReference>
<dbReference type="PRINTS" id="PR00192">
    <property type="entry name" value="FACTINCAPB"/>
</dbReference>
<dbReference type="SUPFAM" id="SSF90096">
    <property type="entry name" value="Subunits of heterodimeric actin filament capping protein Capz"/>
    <property type="match status" value="1"/>
</dbReference>
<dbReference type="PROSITE" id="PS00231">
    <property type="entry name" value="F_ACTIN_CAPPING_BETA"/>
    <property type="match status" value="1"/>
</dbReference>
<name>CAPZB_YARLI</name>
<keyword id="KW-0117">Actin capping</keyword>
<keyword id="KW-0009">Actin-binding</keyword>
<keyword id="KW-0963">Cytoplasm</keyword>
<keyword id="KW-0206">Cytoskeleton</keyword>
<keyword id="KW-1185">Reference proteome</keyword>
<proteinExistence type="inferred from homology"/>
<sequence>MSDEQYDAALSLLRRLDPKNVSVNLNSLCKIAPELAEDLLSSVDQPLGVKTCKSTKKEYLTCDYNRDGDSFRSPWSGDYEPATDGPTPSAALRKLEVLANDSFDIYRDLYYEGGVSSVYLWDQGEGDNTNSFAGVVLLKKTSPSSSWDSIHVFEVETSRGEGIYRVTSTVILDLGSKSPKLGLSGNLTRQTEREMAVDEPSQHIANLGSIVEDVESKLRNQLQEVYFGKARDIVGQVRSLGGVEDAKQKQRQEEVIKGLQ</sequence>
<gene>
    <name type="primary">CAP2</name>
    <name type="ordered locus">YALI0C20735g</name>
</gene>
<accession>Q6CBA2</accession>
<organism>
    <name type="scientific">Yarrowia lipolytica (strain CLIB 122 / E 150)</name>
    <name type="common">Yeast</name>
    <name type="synonym">Candida lipolytica</name>
    <dbReference type="NCBI Taxonomy" id="284591"/>
    <lineage>
        <taxon>Eukaryota</taxon>
        <taxon>Fungi</taxon>
        <taxon>Dikarya</taxon>
        <taxon>Ascomycota</taxon>
        <taxon>Saccharomycotina</taxon>
        <taxon>Dipodascomycetes</taxon>
        <taxon>Dipodascales</taxon>
        <taxon>Dipodascales incertae sedis</taxon>
        <taxon>Yarrowia</taxon>
    </lineage>
</organism>
<comment type="function">
    <text evidence="1">F-actin-capping proteins bind in a Ca(2+)-independent manner to the fast growing ends of actin filaments (barbed end) thereby blocking the exchange of subunits at these ends. Unlike other capping proteins (such as gelsolin and severin), these proteins do not sever actin filaments (By similarity).</text>
</comment>
<comment type="subunit">
    <text evidence="2">Component of the F-actin capping complex, composed of a heterodimer of an alpha and a beta subunit.</text>
</comment>
<comment type="subcellular location">
    <subcellularLocation>
        <location evidence="2">Cytoplasm</location>
        <location evidence="2">Cytoskeleton</location>
        <location evidence="2">Actin patch</location>
    </subcellularLocation>
    <subcellularLocation>
        <location evidence="3">Cytoplasm</location>
        <location evidence="3">Cytoskeleton</location>
    </subcellularLocation>
</comment>
<comment type="similarity">
    <text evidence="4">Belongs to the F-actin-capping protein beta subunit family.</text>
</comment>
<feature type="chain" id="PRO_0000256843" description="F-actin-capping protein subunit beta">
    <location>
        <begin position="1"/>
        <end position="260"/>
    </location>
</feature>